<comment type="function">
    <text evidence="2 3">Shows cytolytic activity on many different cells by forming pore in lipid membranes. In vivo, increases heart rate or kills the animal by cardiac arrest. In addition, it binds to heparin with high affinity, interacts with Kv channel-interacting protein 1 (KCNIP1) in a calcium-independent manner, and binds to integrin alpha-V/beta-3 (ITGAV/ITGB3) with moderate affinity.</text>
</comment>
<comment type="subunit">
    <text evidence="2">Monomer in solution; Homodimer and oligomer in the presence of negatively charged lipids forming a pore with a size ranging between 20 and 30 Angstroms.</text>
</comment>
<comment type="subcellular location">
    <subcellularLocation>
        <location evidence="1">Secreted</location>
    </subcellularLocation>
    <subcellularLocation>
        <location evidence="2">Target cell membrane</location>
    </subcellularLocation>
</comment>
<comment type="tissue specificity">
    <text evidence="4">Expressed by the venom gland.</text>
</comment>
<comment type="miscellaneous">
    <text evidence="4">Is classified as a P-type cytotoxin, since a proline residue stands at position 51 (Pro-31 in standard classification).</text>
</comment>
<comment type="similarity">
    <text evidence="4">Belongs to the three-finger toxin family. Short-chain subfamily. Type IA cytotoxin sub-subfamily.</text>
</comment>
<keyword id="KW-0123">Cardiotoxin</keyword>
<keyword id="KW-0204">Cytolysis</keyword>
<keyword id="KW-1015">Disulfide bond</keyword>
<keyword id="KW-0472">Membrane</keyword>
<keyword id="KW-0964">Secreted</keyword>
<keyword id="KW-0732">Signal</keyword>
<keyword id="KW-1052">Target cell membrane</keyword>
<keyword id="KW-1053">Target membrane</keyword>
<keyword id="KW-0800">Toxin</keyword>
<sequence length="81" mass="9068">MKTLLLTLVVVTIVCLDLGYTLKCNKLVPLFYKTCPAGKNLCYKMFMVAMPKVPVKRGCIDVCPKSSLLVKYVCCNTDRCN</sequence>
<evidence type="ECO:0000250" key="1"/>
<evidence type="ECO:0000250" key="2">
    <source>
        <dbReference type="UniProtKB" id="P60301"/>
    </source>
</evidence>
<evidence type="ECO:0000250" key="3">
    <source>
        <dbReference type="UniProtKB" id="P60304"/>
    </source>
</evidence>
<evidence type="ECO:0000305" key="4"/>
<organism>
    <name type="scientific">Naja sputatrix</name>
    <name type="common">Malayan spitting cobra</name>
    <name type="synonym">Naja naja sputatrix</name>
    <dbReference type="NCBI Taxonomy" id="33626"/>
    <lineage>
        <taxon>Eukaryota</taxon>
        <taxon>Metazoa</taxon>
        <taxon>Chordata</taxon>
        <taxon>Craniata</taxon>
        <taxon>Vertebrata</taxon>
        <taxon>Euteleostomi</taxon>
        <taxon>Lepidosauria</taxon>
        <taxon>Squamata</taxon>
        <taxon>Bifurcata</taxon>
        <taxon>Unidentata</taxon>
        <taxon>Episquamata</taxon>
        <taxon>Toxicofera</taxon>
        <taxon>Serpentes</taxon>
        <taxon>Colubroidea</taxon>
        <taxon>Elapidae</taxon>
        <taxon>Elapinae</taxon>
        <taxon>Naja</taxon>
    </lineage>
</organism>
<feature type="signal peptide" evidence="1">
    <location>
        <begin position="1"/>
        <end position="21"/>
    </location>
</feature>
<feature type="chain" id="PRO_0000035398" description="Cytotoxin 4a">
    <location>
        <begin position="22"/>
        <end position="81"/>
    </location>
</feature>
<feature type="disulfide bond" evidence="2">
    <location>
        <begin position="24"/>
        <end position="42"/>
    </location>
</feature>
<feature type="disulfide bond" evidence="2">
    <location>
        <begin position="35"/>
        <end position="59"/>
    </location>
</feature>
<feature type="disulfide bond" evidence="2">
    <location>
        <begin position="63"/>
        <end position="74"/>
    </location>
</feature>
<feature type="disulfide bond" evidence="2">
    <location>
        <begin position="75"/>
        <end position="80"/>
    </location>
</feature>
<protein>
    <recommendedName>
        <fullName>Cytotoxin 4a</fullName>
    </recommendedName>
    <alternativeName>
        <fullName>Cardiotoxin-4a</fullName>
        <shortName>CTX-4a</shortName>
        <shortName>Ctx4a</shortName>
    </alternativeName>
</protein>
<accession>O93473</accession>
<name>3SA4A_NAJSP</name>
<dbReference type="EMBL" id="U86594">
    <property type="protein sequence ID" value="AAC27689.1"/>
    <property type="molecule type" value="mRNA"/>
</dbReference>
<dbReference type="BMRB" id="O93473"/>
<dbReference type="SMR" id="O93473"/>
<dbReference type="GO" id="GO:0005576">
    <property type="term" value="C:extracellular region"/>
    <property type="evidence" value="ECO:0007669"/>
    <property type="project" value="UniProtKB-SubCell"/>
</dbReference>
<dbReference type="GO" id="GO:0016020">
    <property type="term" value="C:membrane"/>
    <property type="evidence" value="ECO:0007669"/>
    <property type="project" value="UniProtKB-KW"/>
</dbReference>
<dbReference type="GO" id="GO:0044218">
    <property type="term" value="C:other organism cell membrane"/>
    <property type="evidence" value="ECO:0007669"/>
    <property type="project" value="UniProtKB-KW"/>
</dbReference>
<dbReference type="GO" id="GO:0090729">
    <property type="term" value="F:toxin activity"/>
    <property type="evidence" value="ECO:0007669"/>
    <property type="project" value="UniProtKB-KW"/>
</dbReference>
<dbReference type="GO" id="GO:0031640">
    <property type="term" value="P:killing of cells of another organism"/>
    <property type="evidence" value="ECO:0007669"/>
    <property type="project" value="UniProtKB-KW"/>
</dbReference>
<dbReference type="CDD" id="cd00206">
    <property type="entry name" value="TFP_snake_toxin"/>
    <property type="match status" value="1"/>
</dbReference>
<dbReference type="FunFam" id="2.10.60.10:FF:000024">
    <property type="entry name" value="Cytotoxin 1"/>
    <property type="match status" value="1"/>
</dbReference>
<dbReference type="Gene3D" id="2.10.60.10">
    <property type="entry name" value="CD59"/>
    <property type="match status" value="1"/>
</dbReference>
<dbReference type="InterPro" id="IPR003572">
    <property type="entry name" value="Cytotoxin_Cobra"/>
</dbReference>
<dbReference type="InterPro" id="IPR003571">
    <property type="entry name" value="Snake_3FTx"/>
</dbReference>
<dbReference type="InterPro" id="IPR045860">
    <property type="entry name" value="Snake_toxin-like_sf"/>
</dbReference>
<dbReference type="InterPro" id="IPR018354">
    <property type="entry name" value="Snake_toxin_con_site"/>
</dbReference>
<dbReference type="InterPro" id="IPR054131">
    <property type="entry name" value="Toxin_cobra-type"/>
</dbReference>
<dbReference type="Pfam" id="PF21947">
    <property type="entry name" value="Toxin_cobra-type"/>
    <property type="match status" value="1"/>
</dbReference>
<dbReference type="PRINTS" id="PR00282">
    <property type="entry name" value="CYTOTOXIN"/>
</dbReference>
<dbReference type="SUPFAM" id="SSF57302">
    <property type="entry name" value="Snake toxin-like"/>
    <property type="match status" value="1"/>
</dbReference>
<dbReference type="PROSITE" id="PS00272">
    <property type="entry name" value="SNAKE_TOXIN"/>
    <property type="match status" value="1"/>
</dbReference>
<proteinExistence type="inferred from homology"/>
<reference key="1">
    <citation type="journal article" date="1998" name="Biochim. Biophys. Acta">
        <title>Six isoforms of cardiotoxin in malayan spitting cobra (Naja naja sputatrix) venom: cloning and characterization of cDNAs.</title>
        <authorList>
            <person name="Jeyaseelan K."/>
            <person name="Armugam A."/>
            <person name="Lachumanan R."/>
            <person name="Tan C.H."/>
            <person name="Tan N.H."/>
        </authorList>
    </citation>
    <scope>NUCLEOTIDE SEQUENCE [MRNA]</scope>
    <source>
        <tissue>Venom gland</tissue>
    </source>
</reference>